<evidence type="ECO:0000255" key="1">
    <source>
        <dbReference type="HAMAP-Rule" id="MF_01077"/>
    </source>
</evidence>
<protein>
    <recommendedName>
        <fullName evidence="1">Ribosome maturation factor RimP</fullName>
    </recommendedName>
</protein>
<name>RIMP_ELUMP</name>
<reference key="1">
    <citation type="journal article" date="2009" name="Appl. Environ. Microbiol.">
        <title>Genomic analysis of 'Elusimicrobium minutum,' the first cultivated representative of the phylum 'Elusimicrobia' (formerly termite group 1).</title>
        <authorList>
            <person name="Herlemann D.P.R."/>
            <person name="Geissinger O."/>
            <person name="Ikeda-Ohtsubo W."/>
            <person name="Kunin V."/>
            <person name="Sun H."/>
            <person name="Lapidus A."/>
            <person name="Hugenholtz P."/>
            <person name="Brune A."/>
        </authorList>
    </citation>
    <scope>NUCLEOTIDE SEQUENCE [LARGE SCALE GENOMIC DNA]</scope>
    <source>
        <strain>Pei191</strain>
    </source>
</reference>
<dbReference type="EMBL" id="CP001055">
    <property type="protein sequence ID" value="ACC98220.1"/>
    <property type="molecule type" value="Genomic_DNA"/>
</dbReference>
<dbReference type="RefSeq" id="WP_012414835.1">
    <property type="nucleotide sequence ID" value="NC_010644.1"/>
</dbReference>
<dbReference type="SMR" id="B2KC93"/>
<dbReference type="STRING" id="445932.Emin_0665"/>
<dbReference type="KEGG" id="emi:Emin_0665"/>
<dbReference type="HOGENOM" id="CLU_070525_2_2_0"/>
<dbReference type="Proteomes" id="UP000001029">
    <property type="component" value="Chromosome"/>
</dbReference>
<dbReference type="GO" id="GO:0005829">
    <property type="term" value="C:cytosol"/>
    <property type="evidence" value="ECO:0007669"/>
    <property type="project" value="TreeGrafter"/>
</dbReference>
<dbReference type="GO" id="GO:0000028">
    <property type="term" value="P:ribosomal small subunit assembly"/>
    <property type="evidence" value="ECO:0007669"/>
    <property type="project" value="TreeGrafter"/>
</dbReference>
<dbReference type="GO" id="GO:0006412">
    <property type="term" value="P:translation"/>
    <property type="evidence" value="ECO:0007669"/>
    <property type="project" value="TreeGrafter"/>
</dbReference>
<dbReference type="CDD" id="cd01734">
    <property type="entry name" value="YlxS_C"/>
    <property type="match status" value="1"/>
</dbReference>
<dbReference type="Gene3D" id="2.30.30.180">
    <property type="entry name" value="Ribosome maturation factor RimP, C-terminal domain"/>
    <property type="match status" value="1"/>
</dbReference>
<dbReference type="Gene3D" id="3.30.300.70">
    <property type="entry name" value="RimP-like superfamily, N-terminal"/>
    <property type="match status" value="1"/>
</dbReference>
<dbReference type="HAMAP" id="MF_01077">
    <property type="entry name" value="RimP"/>
    <property type="match status" value="1"/>
</dbReference>
<dbReference type="InterPro" id="IPR003728">
    <property type="entry name" value="Ribosome_maturation_RimP"/>
</dbReference>
<dbReference type="InterPro" id="IPR028998">
    <property type="entry name" value="RimP_C"/>
</dbReference>
<dbReference type="InterPro" id="IPR036847">
    <property type="entry name" value="RimP_C_sf"/>
</dbReference>
<dbReference type="InterPro" id="IPR028989">
    <property type="entry name" value="RimP_N"/>
</dbReference>
<dbReference type="InterPro" id="IPR035956">
    <property type="entry name" value="RimP_N_sf"/>
</dbReference>
<dbReference type="PANTHER" id="PTHR33867">
    <property type="entry name" value="RIBOSOME MATURATION FACTOR RIMP"/>
    <property type="match status" value="1"/>
</dbReference>
<dbReference type="PANTHER" id="PTHR33867:SF1">
    <property type="entry name" value="RIBOSOME MATURATION FACTOR RIMP"/>
    <property type="match status" value="1"/>
</dbReference>
<dbReference type="Pfam" id="PF17384">
    <property type="entry name" value="DUF150_C"/>
    <property type="match status" value="1"/>
</dbReference>
<dbReference type="Pfam" id="PF02576">
    <property type="entry name" value="RimP_N"/>
    <property type="match status" value="1"/>
</dbReference>
<dbReference type="SUPFAM" id="SSF74942">
    <property type="entry name" value="YhbC-like, C-terminal domain"/>
    <property type="match status" value="1"/>
</dbReference>
<dbReference type="SUPFAM" id="SSF75420">
    <property type="entry name" value="YhbC-like, N-terminal domain"/>
    <property type="match status" value="1"/>
</dbReference>
<feature type="chain" id="PRO_0000384645" description="Ribosome maturation factor RimP">
    <location>
        <begin position="1"/>
        <end position="152"/>
    </location>
</feature>
<accession>B2KC93</accession>
<proteinExistence type="inferred from homology"/>
<keyword id="KW-0963">Cytoplasm</keyword>
<keyword id="KW-1185">Reference proteome</keyword>
<keyword id="KW-0690">Ribosome biogenesis</keyword>
<gene>
    <name evidence="1" type="primary">rimP</name>
    <name type="ordered locus">Emin_0665</name>
</gene>
<sequence length="152" mass="17100">MRDIKAIESVVADGLANQGYEVVDLIVQNQGSKKLFQFFVDKEGGINLDDVEKASRLIDSIIEMENLIEGAYILEASSPGIKRVLKKPEHFKKFIGQRAKITLKQMIENRANFTGLIAGANETEMTLDDGTTQFKFKYEDIKKANLDPVLEF</sequence>
<organism>
    <name type="scientific">Elusimicrobium minutum (strain Pei191)</name>
    <dbReference type="NCBI Taxonomy" id="445932"/>
    <lineage>
        <taxon>Bacteria</taxon>
        <taxon>Pseudomonadati</taxon>
        <taxon>Elusimicrobiota</taxon>
        <taxon>Elusimicrobia</taxon>
        <taxon>Elusimicrobiales</taxon>
        <taxon>Elusimicrobiaceae</taxon>
        <taxon>Elusimicrobium</taxon>
    </lineage>
</organism>
<comment type="function">
    <text evidence="1">Required for maturation of 30S ribosomal subunits.</text>
</comment>
<comment type="subcellular location">
    <subcellularLocation>
        <location evidence="1">Cytoplasm</location>
    </subcellularLocation>
</comment>
<comment type="similarity">
    <text evidence="1">Belongs to the RimP family.</text>
</comment>